<gene>
    <name evidence="1" type="primary">mdoB</name>
    <name evidence="1" type="synonym">opgB</name>
    <name type="ordered locus">Z5959</name>
    <name type="ordered locus">ECs5319</name>
</gene>
<name>OPGB_ECO57</name>
<evidence type="ECO:0000255" key="1">
    <source>
        <dbReference type="HAMAP-Rule" id="MF_01070"/>
    </source>
</evidence>
<evidence type="ECO:0000305" key="2"/>
<accession>Q8XB59</accession>
<sequence length="763" mass="85524">MSELLSFALFLASVLIYAWKAGRNTWWFAATLTVLGLFVVLNITLFASDYFTGDGINDAVLYTLTNSLTGAGVSKYILPGIGIVLGLTAVFGALGWILRRRRHHPHHFGYSLLALLLALGSVDASPAFRQITELVKSQSRDGDPDFAAYYKEPSKTIPDPKLNLVYIYGESLERTYFDNEAFPDLTPELGALKNEGLDFSHTQQLPGTDYTIAGMVASQCGIPLFAPFEGNASASVSSFFPQNICLGDILKNSGYQNYFVQGANLRFAGKDVFLKSHGFDHLYGSEELKSVVADPHYRNDWGFYDDTVLDEAWKKFEELSRSGQRFSLFTLTVDTHHPDGFISRTCNRKKYDFDGKPNQSFSAVSCSQENIATFINKIKASPWFKDTVIVVSSDHLAMNNTAWKYLNKQDRNNLFFVIRGDKPQQETLAVKRNTMDNGATVLDILGGDNYLGLGRSSLSGQSMSEIFLNIKEKTLAWKPDIIRLWKFPKEMKEFTIDQQKNMIAFSGSHFRLPLLLRVSDKRVEPLPESEYSAPLRFQLADFAPRDNFVWVDRCYKMAQLWAPELALSTDWCVSQGQLGGQQIVQHVDKTTWKSKTAFKDTVIDMARYKGNVDTLKIVDNDIRYKADSFIFNVAGAPEEVKQFSGISRPESWGRWSNAQLGDEVKIEYKHPLPKKFDLVITAKAYGNNASRPIPVRVGNEEQTLVLGNEVTTTTLHFDNPTDADTLVIVPPEPVSTNEGNILGHSPRKLGIGMVEIKVVEREG</sequence>
<feature type="chain" id="PRO_0000213061" description="Phosphoglycerol transferase I">
    <location>
        <begin position="1"/>
        <end position="763"/>
    </location>
</feature>
<feature type="transmembrane region" description="Helical" evidence="1">
    <location>
        <begin position="4"/>
        <end position="19"/>
    </location>
</feature>
<feature type="transmembrane region" description="Helical" evidence="1">
    <location>
        <begin position="26"/>
        <end position="48"/>
    </location>
</feature>
<feature type="transmembrane region" description="Helical" evidence="1">
    <location>
        <begin position="76"/>
        <end position="98"/>
    </location>
</feature>
<feature type="transmembrane region" description="Helical" evidence="1">
    <location>
        <begin position="105"/>
        <end position="127"/>
    </location>
</feature>
<organism>
    <name type="scientific">Escherichia coli O157:H7</name>
    <dbReference type="NCBI Taxonomy" id="83334"/>
    <lineage>
        <taxon>Bacteria</taxon>
        <taxon>Pseudomonadati</taxon>
        <taxon>Pseudomonadota</taxon>
        <taxon>Gammaproteobacteria</taxon>
        <taxon>Enterobacterales</taxon>
        <taxon>Enterobacteriaceae</taxon>
        <taxon>Escherichia</taxon>
    </lineage>
</organism>
<keyword id="KW-0997">Cell inner membrane</keyword>
<keyword id="KW-1003">Cell membrane</keyword>
<keyword id="KW-0472">Membrane</keyword>
<keyword id="KW-1185">Reference proteome</keyword>
<keyword id="KW-0808">Transferase</keyword>
<keyword id="KW-0812">Transmembrane</keyword>
<keyword id="KW-1133">Transmembrane helix</keyword>
<dbReference type="EC" id="2.7.8.20" evidence="1"/>
<dbReference type="EMBL" id="AE005174">
    <property type="protein sequence ID" value="AAG59542.1"/>
    <property type="status" value="ALT_INIT"/>
    <property type="molecule type" value="Genomic_DNA"/>
</dbReference>
<dbReference type="EMBL" id="BA000007">
    <property type="protein sequence ID" value="BAB38742.1"/>
    <property type="status" value="ALT_INIT"/>
    <property type="molecule type" value="Genomic_DNA"/>
</dbReference>
<dbReference type="PIR" id="B86135">
    <property type="entry name" value="B86135"/>
</dbReference>
<dbReference type="PIR" id="G91293">
    <property type="entry name" value="G91293"/>
</dbReference>
<dbReference type="RefSeq" id="NP_313346.2">
    <property type="nucleotide sequence ID" value="NC_002695.1"/>
</dbReference>
<dbReference type="RefSeq" id="WP_001292676.1">
    <property type="nucleotide sequence ID" value="NZ_VOAI01000002.1"/>
</dbReference>
<dbReference type="SMR" id="Q8XB59"/>
<dbReference type="STRING" id="155864.Z5959"/>
<dbReference type="GeneID" id="913581"/>
<dbReference type="KEGG" id="ece:Z5959"/>
<dbReference type="KEGG" id="ecs:ECs_5319"/>
<dbReference type="PATRIC" id="fig|386585.9.peg.5563"/>
<dbReference type="eggNOG" id="COG1368">
    <property type="taxonomic scope" value="Bacteria"/>
</dbReference>
<dbReference type="HOGENOM" id="CLU_023986_1_0_6"/>
<dbReference type="OMA" id="AMNNTAY"/>
<dbReference type="UniPathway" id="UPA00637"/>
<dbReference type="Proteomes" id="UP000000558">
    <property type="component" value="Chromosome"/>
</dbReference>
<dbReference type="Proteomes" id="UP000002519">
    <property type="component" value="Chromosome"/>
</dbReference>
<dbReference type="GO" id="GO:0005886">
    <property type="term" value="C:plasma membrane"/>
    <property type="evidence" value="ECO:0007669"/>
    <property type="project" value="UniProtKB-SubCell"/>
</dbReference>
<dbReference type="GO" id="GO:0008960">
    <property type="term" value="F:phosphatidylglycerol-membrane-oligosaccharide glycerophosphotransferase activity"/>
    <property type="evidence" value="ECO:0007669"/>
    <property type="project" value="UniProtKB-UniRule"/>
</dbReference>
<dbReference type="GO" id="GO:0009250">
    <property type="term" value="P:glucan biosynthetic process"/>
    <property type="evidence" value="ECO:0007669"/>
    <property type="project" value="UniProtKB-UniRule"/>
</dbReference>
<dbReference type="CDD" id="cd16015">
    <property type="entry name" value="LTA_synthase"/>
    <property type="match status" value="1"/>
</dbReference>
<dbReference type="FunFam" id="3.40.720.10:FF:000009">
    <property type="entry name" value="Phosphoglycerol transferase I"/>
    <property type="match status" value="1"/>
</dbReference>
<dbReference type="Gene3D" id="3.40.720.10">
    <property type="entry name" value="Alkaline Phosphatase, subunit A"/>
    <property type="match status" value="1"/>
</dbReference>
<dbReference type="HAMAP" id="MF_01070">
    <property type="entry name" value="MdoB_OpgB"/>
    <property type="match status" value="1"/>
</dbReference>
<dbReference type="InterPro" id="IPR017850">
    <property type="entry name" value="Alkaline_phosphatase_core_sf"/>
</dbReference>
<dbReference type="InterPro" id="IPR054288">
    <property type="entry name" value="DUF7024"/>
</dbReference>
<dbReference type="InterPro" id="IPR020881">
    <property type="entry name" value="OpgB"/>
</dbReference>
<dbReference type="InterPro" id="IPR050448">
    <property type="entry name" value="OpgB/LTA_synthase_biosynth"/>
</dbReference>
<dbReference type="InterPro" id="IPR000917">
    <property type="entry name" value="Sulfatase_N"/>
</dbReference>
<dbReference type="NCBIfam" id="NF003000">
    <property type="entry name" value="PRK03776.1"/>
    <property type="match status" value="1"/>
</dbReference>
<dbReference type="PANTHER" id="PTHR47371">
    <property type="entry name" value="LIPOTEICHOIC ACID SYNTHASE"/>
    <property type="match status" value="1"/>
</dbReference>
<dbReference type="PANTHER" id="PTHR47371:SF3">
    <property type="entry name" value="PHOSPHOGLYCEROL TRANSFERASE I"/>
    <property type="match status" value="1"/>
</dbReference>
<dbReference type="Pfam" id="PF22895">
    <property type="entry name" value="DUF7024"/>
    <property type="match status" value="1"/>
</dbReference>
<dbReference type="Pfam" id="PF00884">
    <property type="entry name" value="Sulfatase"/>
    <property type="match status" value="1"/>
</dbReference>
<dbReference type="SUPFAM" id="SSF53649">
    <property type="entry name" value="Alkaline phosphatase-like"/>
    <property type="match status" value="1"/>
</dbReference>
<protein>
    <recommendedName>
        <fullName evidence="1">Phosphoglycerol transferase I</fullName>
        <ecNumber evidence="1">2.7.8.20</ecNumber>
    </recommendedName>
    <alternativeName>
        <fullName evidence="1">Phosphatidylglycerol--membrane-oligosaccharide glycerophosphotransferase</fullName>
    </alternativeName>
</protein>
<comment type="function">
    <text evidence="1">Transfers a phosphoglycerol residue from phosphatidylglycerol to the membrane-bound nascent glucan backbones.</text>
</comment>
<comment type="catalytic activity">
    <reaction evidence="1">
        <text>a phosphatidylglycerol + a membrane-derived-oligosaccharide D-glucose = a 1,2-diacyl-sn-glycerol + a membrane-derived-oligosaccharide 6-(glycerophospho)-D-glucose.</text>
        <dbReference type="EC" id="2.7.8.20"/>
    </reaction>
</comment>
<comment type="pathway">
    <text evidence="1">Glycan metabolism; osmoregulated periplasmic glucan (OPG) biosynthesis.</text>
</comment>
<comment type="subcellular location">
    <subcellularLocation>
        <location evidence="1">Cell inner membrane</location>
        <topology evidence="1">Multi-pass membrane protein</topology>
    </subcellularLocation>
</comment>
<comment type="similarity">
    <text evidence="1">Belongs to the OpgB family.</text>
</comment>
<comment type="sequence caution" evidence="2">
    <conflict type="erroneous initiation">
        <sequence resource="EMBL-CDS" id="AAG59542"/>
    </conflict>
</comment>
<comment type="sequence caution" evidence="2">
    <conflict type="erroneous initiation">
        <sequence resource="EMBL-CDS" id="BAB38742"/>
    </conflict>
</comment>
<proteinExistence type="inferred from homology"/>
<reference key="1">
    <citation type="journal article" date="2001" name="Nature">
        <title>Genome sequence of enterohaemorrhagic Escherichia coli O157:H7.</title>
        <authorList>
            <person name="Perna N.T."/>
            <person name="Plunkett G. III"/>
            <person name="Burland V."/>
            <person name="Mau B."/>
            <person name="Glasner J.D."/>
            <person name="Rose D.J."/>
            <person name="Mayhew G.F."/>
            <person name="Evans P.S."/>
            <person name="Gregor J."/>
            <person name="Kirkpatrick H.A."/>
            <person name="Posfai G."/>
            <person name="Hackett J."/>
            <person name="Klink S."/>
            <person name="Boutin A."/>
            <person name="Shao Y."/>
            <person name="Miller L."/>
            <person name="Grotbeck E.J."/>
            <person name="Davis N.W."/>
            <person name="Lim A."/>
            <person name="Dimalanta E.T."/>
            <person name="Potamousis K."/>
            <person name="Apodaca J."/>
            <person name="Anantharaman T.S."/>
            <person name="Lin J."/>
            <person name="Yen G."/>
            <person name="Schwartz D.C."/>
            <person name="Welch R.A."/>
            <person name="Blattner F.R."/>
        </authorList>
    </citation>
    <scope>NUCLEOTIDE SEQUENCE [LARGE SCALE GENOMIC DNA]</scope>
    <source>
        <strain>O157:H7 / EDL933 / ATCC 700927 / EHEC</strain>
    </source>
</reference>
<reference key="2">
    <citation type="journal article" date="2001" name="DNA Res.">
        <title>Complete genome sequence of enterohemorrhagic Escherichia coli O157:H7 and genomic comparison with a laboratory strain K-12.</title>
        <authorList>
            <person name="Hayashi T."/>
            <person name="Makino K."/>
            <person name="Ohnishi M."/>
            <person name="Kurokawa K."/>
            <person name="Ishii K."/>
            <person name="Yokoyama K."/>
            <person name="Han C.-G."/>
            <person name="Ohtsubo E."/>
            <person name="Nakayama K."/>
            <person name="Murata T."/>
            <person name="Tanaka M."/>
            <person name="Tobe T."/>
            <person name="Iida T."/>
            <person name="Takami H."/>
            <person name="Honda T."/>
            <person name="Sasakawa C."/>
            <person name="Ogasawara N."/>
            <person name="Yasunaga T."/>
            <person name="Kuhara S."/>
            <person name="Shiba T."/>
            <person name="Hattori M."/>
            <person name="Shinagawa H."/>
        </authorList>
    </citation>
    <scope>NUCLEOTIDE SEQUENCE [LARGE SCALE GENOMIC DNA]</scope>
    <source>
        <strain>O157:H7 / Sakai / RIMD 0509952 / EHEC</strain>
    </source>
</reference>